<reference key="1">
    <citation type="journal article" date="1988" name="J. Bacteriol.">
        <title>Nucleotide sequence and genetic analysis of the nifB-nifQ region from Azotobacter vinelandii.</title>
        <authorList>
            <person name="Joerger R.D."/>
            <person name="Bishop P.E."/>
        </authorList>
    </citation>
    <scope>NUCLEOTIDE SEQUENCE [GENOMIC DNA]</scope>
</reference>
<feature type="chain" id="PRO_0000159184" description="Ferredoxin-like protein in nif region">
    <location>
        <begin position="1"/>
        <end position="92"/>
    </location>
</feature>
<feature type="domain" description="4Fe-4S ferredoxin-type 1" evidence="2">
    <location>
        <begin position="2"/>
        <end position="28"/>
    </location>
</feature>
<feature type="domain" description="4Fe-4S ferredoxin-type 2" evidence="2">
    <location>
        <begin position="29"/>
        <end position="65"/>
    </location>
</feature>
<feature type="binding site" evidence="1">
    <location>
        <position position="9"/>
    </location>
    <ligand>
        <name>[4Fe-4S] cluster</name>
        <dbReference type="ChEBI" id="CHEBI:49883"/>
        <label>1</label>
    </ligand>
</feature>
<feature type="binding site" evidence="1">
    <location>
        <position position="12"/>
    </location>
    <ligand>
        <name>[4Fe-4S] cluster</name>
        <dbReference type="ChEBI" id="CHEBI:49883"/>
        <label>1</label>
    </ligand>
</feature>
<feature type="binding site" evidence="1">
    <location>
        <position position="15"/>
    </location>
    <ligand>
        <name>[4Fe-4S] cluster</name>
        <dbReference type="ChEBI" id="CHEBI:49883"/>
        <label>1</label>
    </ligand>
</feature>
<feature type="binding site" evidence="1">
    <location>
        <position position="19"/>
    </location>
    <ligand>
        <name>[4Fe-4S] cluster</name>
        <dbReference type="ChEBI" id="CHEBI:49883"/>
        <label>1</label>
    </ligand>
</feature>
<feature type="binding site" evidence="1">
    <location>
        <position position="38"/>
    </location>
    <ligand>
        <name>[4Fe-4S] cluster</name>
        <dbReference type="ChEBI" id="CHEBI:49883"/>
        <label>2</label>
    </ligand>
</feature>
<feature type="binding site" evidence="1">
    <location>
        <position position="41"/>
    </location>
    <ligand>
        <name>[4Fe-4S] cluster</name>
        <dbReference type="ChEBI" id="CHEBI:49883"/>
        <label>2</label>
    </ligand>
</feature>
<feature type="binding site" evidence="1">
    <location>
        <position position="50"/>
    </location>
    <ligand>
        <name>[4Fe-4S] cluster</name>
        <dbReference type="ChEBI" id="CHEBI:49883"/>
        <label>2</label>
    </ligand>
</feature>
<feature type="binding site" evidence="1">
    <location>
        <position position="54"/>
    </location>
    <ligand>
        <name>[4Fe-4S] cluster</name>
        <dbReference type="ChEBI" id="CHEBI:49883"/>
        <label>2</label>
    </ligand>
</feature>
<organism>
    <name type="scientific">Azotobacter vinelandii</name>
    <dbReference type="NCBI Taxonomy" id="354"/>
    <lineage>
        <taxon>Bacteria</taxon>
        <taxon>Pseudomonadati</taxon>
        <taxon>Pseudomonadota</taxon>
        <taxon>Gammaproteobacteria</taxon>
        <taxon>Pseudomonadales</taxon>
        <taxon>Pseudomonadaceae</taxon>
        <taxon>Azotobacter</taxon>
    </lineage>
</organism>
<name>FERN_AZOVI</name>
<comment type="function">
    <text>Ferredoxins are iron-sulfur proteins that transfer electrons in a wide variety of metabolic reactions.</text>
</comment>
<comment type="cofactor">
    <cofactor evidence="3">
        <name>[4Fe-4S] cluster</name>
        <dbReference type="ChEBI" id="CHEBI:49883"/>
    </cofactor>
    <text evidence="3">Binds 2 [4Fe-4S] clusters.</text>
</comment>
<dbReference type="EMBL" id="J03411">
    <property type="protein sequence ID" value="AAA22149.1"/>
    <property type="molecule type" value="Genomic_DNA"/>
</dbReference>
<dbReference type="PIR" id="C27733">
    <property type="entry name" value="C27733"/>
</dbReference>
<dbReference type="RefSeq" id="WP_012703542.1">
    <property type="nucleotide sequence ID" value="NZ_FPKM01000015.1"/>
</dbReference>
<dbReference type="SMR" id="P11054"/>
<dbReference type="GeneID" id="88187936"/>
<dbReference type="OMA" id="CVNCWAC"/>
<dbReference type="GO" id="GO:0051539">
    <property type="term" value="F:4 iron, 4 sulfur cluster binding"/>
    <property type="evidence" value="ECO:0007669"/>
    <property type="project" value="UniProtKB-KW"/>
</dbReference>
<dbReference type="GO" id="GO:0046872">
    <property type="term" value="F:metal ion binding"/>
    <property type="evidence" value="ECO:0007669"/>
    <property type="project" value="UniProtKB-KW"/>
</dbReference>
<dbReference type="GO" id="GO:0009399">
    <property type="term" value="P:nitrogen fixation"/>
    <property type="evidence" value="ECO:0007669"/>
    <property type="project" value="UniProtKB-KW"/>
</dbReference>
<dbReference type="Gene3D" id="3.30.70.20">
    <property type="match status" value="1"/>
</dbReference>
<dbReference type="InterPro" id="IPR017896">
    <property type="entry name" value="4Fe4S_Fe-S-bd"/>
</dbReference>
<dbReference type="InterPro" id="IPR017900">
    <property type="entry name" value="4Fe4S_Fe_S_CS"/>
</dbReference>
<dbReference type="Pfam" id="PF12838">
    <property type="entry name" value="Fer4_7"/>
    <property type="match status" value="1"/>
</dbReference>
<dbReference type="SUPFAM" id="SSF54862">
    <property type="entry name" value="4Fe-4S ferredoxins"/>
    <property type="match status" value="1"/>
</dbReference>
<dbReference type="PROSITE" id="PS00198">
    <property type="entry name" value="4FE4S_FER_1"/>
    <property type="match status" value="1"/>
</dbReference>
<dbReference type="PROSITE" id="PS51379">
    <property type="entry name" value="4FE4S_FER_2"/>
    <property type="match status" value="2"/>
</dbReference>
<accession>P11054</accession>
<protein>
    <recommendedName>
        <fullName>Ferredoxin-like protein in nif region</fullName>
    </recommendedName>
</protein>
<proteinExistence type="predicted"/>
<evidence type="ECO:0000250" key="1"/>
<evidence type="ECO:0000255" key="2">
    <source>
        <dbReference type="PROSITE-ProRule" id="PRU00711"/>
    </source>
</evidence>
<evidence type="ECO:0000305" key="3"/>
<keyword id="KW-0004">4Fe-4S</keyword>
<keyword id="KW-0249">Electron transport</keyword>
<keyword id="KW-0408">Iron</keyword>
<keyword id="KW-0411">Iron-sulfur</keyword>
<keyword id="KW-0479">Metal-binding</keyword>
<keyword id="KW-0535">Nitrogen fixation</keyword>
<keyword id="KW-0677">Repeat</keyword>
<keyword id="KW-0813">Transport</keyword>
<sequence length="92" mass="9622">MALKIVESCVNCWACVDVCPSEAISLAGPHFEISASKCTECDGDYAEKQCASICPVEGAILLADGTPANPPGSLTGIPPERLAEAMREIQAR</sequence>